<proteinExistence type="inferred from homology"/>
<reference key="1">
    <citation type="journal article" date="2011" name="J. Bacteriol.">
        <title>Complete genome and proteome of Acholeplasma laidlawii.</title>
        <authorList>
            <person name="Lazarev V.N."/>
            <person name="Levitskii S.A."/>
            <person name="Basovskii Y.I."/>
            <person name="Chukin M.M."/>
            <person name="Akopian T.A."/>
            <person name="Vereshchagin V.V."/>
            <person name="Kostrjukova E.S."/>
            <person name="Kovaleva G.Y."/>
            <person name="Kazanov M.D."/>
            <person name="Malko D.B."/>
            <person name="Vitreschak A.G."/>
            <person name="Sernova N.V."/>
            <person name="Gelfand M.S."/>
            <person name="Demina I.A."/>
            <person name="Serebryakova M.V."/>
            <person name="Galyamina M.A."/>
            <person name="Vtyurin N.N."/>
            <person name="Rogov S.I."/>
            <person name="Alexeev D.G."/>
            <person name="Ladygina V.G."/>
            <person name="Govorun V.M."/>
        </authorList>
    </citation>
    <scope>NUCLEOTIDE SEQUENCE [LARGE SCALE GENOMIC DNA]</scope>
    <source>
        <strain>PG-8A</strain>
    </source>
</reference>
<organism>
    <name type="scientific">Acholeplasma laidlawii (strain PG-8A)</name>
    <dbReference type="NCBI Taxonomy" id="441768"/>
    <lineage>
        <taxon>Bacteria</taxon>
        <taxon>Bacillati</taxon>
        <taxon>Mycoplasmatota</taxon>
        <taxon>Mollicutes</taxon>
        <taxon>Acholeplasmatales</taxon>
        <taxon>Acholeplasmataceae</taxon>
        <taxon>Acholeplasma</taxon>
    </lineage>
</organism>
<keyword id="KW-1185">Reference proteome</keyword>
<keyword id="KW-0687">Ribonucleoprotein</keyword>
<keyword id="KW-0689">Ribosomal protein</keyword>
<keyword id="KW-0694">RNA-binding</keyword>
<keyword id="KW-0699">rRNA-binding</keyword>
<protein>
    <recommendedName>
        <fullName evidence="1">Large ribosomal subunit protein uL2</fullName>
    </recommendedName>
    <alternativeName>
        <fullName evidence="3">50S ribosomal protein L2</fullName>
    </alternativeName>
</protein>
<feature type="chain" id="PRO_1000086316" description="Large ribosomal subunit protein uL2">
    <location>
        <begin position="1"/>
        <end position="276"/>
    </location>
</feature>
<feature type="region of interest" description="Disordered" evidence="2">
    <location>
        <begin position="219"/>
        <end position="276"/>
    </location>
</feature>
<feature type="compositionally biased region" description="Basic residues" evidence="2">
    <location>
        <begin position="252"/>
        <end position="276"/>
    </location>
</feature>
<name>RL2_ACHLI</name>
<sequence length="276" mass="30125">MAVKIYKRTTNGRRNMSVLTFDEITTSTPEKSLLAPITKTGGRNNQGKLTVRHIGGGAKRKYRIIDFKRDKDNVPGKVTSIEYDPNRTANIALITYLDGEKRYIIAPKGLQVGALIVSGSEIDIKVGNALPVMSIPVGTIVHNIELKPGRGGQIARSAGTSAQILGREEKYVLVRLQSGEVRRILGTCKATIGEVGNESHELVRIGKAGRTRHLGVRPTVRGSVMNPNDHPHGGGEGKQPIGRKQQMTPWGKKARGIKTRDKKKASTSMIVRRRNG</sequence>
<evidence type="ECO:0000255" key="1">
    <source>
        <dbReference type="HAMAP-Rule" id="MF_01320"/>
    </source>
</evidence>
<evidence type="ECO:0000256" key="2">
    <source>
        <dbReference type="SAM" id="MobiDB-lite"/>
    </source>
</evidence>
<evidence type="ECO:0000305" key="3"/>
<accession>A9NED6</accession>
<gene>
    <name evidence="1" type="primary">rplB</name>
    <name type="ordered locus">ACL_0090</name>
</gene>
<comment type="function">
    <text evidence="1">One of the primary rRNA binding proteins. Required for association of the 30S and 50S subunits to form the 70S ribosome, for tRNA binding and peptide bond formation. It has been suggested to have peptidyltransferase activity; this is somewhat controversial. Makes several contacts with the 16S rRNA in the 70S ribosome.</text>
</comment>
<comment type="subunit">
    <text evidence="1">Part of the 50S ribosomal subunit. Forms a bridge to the 30S subunit in the 70S ribosome.</text>
</comment>
<comment type="similarity">
    <text evidence="1">Belongs to the universal ribosomal protein uL2 family.</text>
</comment>
<dbReference type="EMBL" id="CP000896">
    <property type="protein sequence ID" value="ABX80716.1"/>
    <property type="molecule type" value="Genomic_DNA"/>
</dbReference>
<dbReference type="RefSeq" id="WP_012242047.1">
    <property type="nucleotide sequence ID" value="NC_010163.1"/>
</dbReference>
<dbReference type="SMR" id="A9NED6"/>
<dbReference type="STRING" id="441768.ACL_0090"/>
<dbReference type="GeneID" id="41338292"/>
<dbReference type="KEGG" id="acl:ACL_0090"/>
<dbReference type="eggNOG" id="COG0090">
    <property type="taxonomic scope" value="Bacteria"/>
</dbReference>
<dbReference type="HOGENOM" id="CLU_036235_2_1_14"/>
<dbReference type="OrthoDB" id="9778722at2"/>
<dbReference type="Proteomes" id="UP000008558">
    <property type="component" value="Chromosome"/>
</dbReference>
<dbReference type="GO" id="GO:0015934">
    <property type="term" value="C:large ribosomal subunit"/>
    <property type="evidence" value="ECO:0007669"/>
    <property type="project" value="InterPro"/>
</dbReference>
<dbReference type="GO" id="GO:0019843">
    <property type="term" value="F:rRNA binding"/>
    <property type="evidence" value="ECO:0007669"/>
    <property type="project" value="UniProtKB-UniRule"/>
</dbReference>
<dbReference type="GO" id="GO:0003735">
    <property type="term" value="F:structural constituent of ribosome"/>
    <property type="evidence" value="ECO:0007669"/>
    <property type="project" value="InterPro"/>
</dbReference>
<dbReference type="GO" id="GO:0016740">
    <property type="term" value="F:transferase activity"/>
    <property type="evidence" value="ECO:0007669"/>
    <property type="project" value="InterPro"/>
</dbReference>
<dbReference type="GO" id="GO:0002181">
    <property type="term" value="P:cytoplasmic translation"/>
    <property type="evidence" value="ECO:0007669"/>
    <property type="project" value="TreeGrafter"/>
</dbReference>
<dbReference type="FunFam" id="2.30.30.30:FF:000001">
    <property type="entry name" value="50S ribosomal protein L2"/>
    <property type="match status" value="1"/>
</dbReference>
<dbReference type="FunFam" id="2.40.50.140:FF:000003">
    <property type="entry name" value="50S ribosomal protein L2"/>
    <property type="match status" value="1"/>
</dbReference>
<dbReference type="FunFam" id="4.10.950.10:FF:000001">
    <property type="entry name" value="50S ribosomal protein L2"/>
    <property type="match status" value="1"/>
</dbReference>
<dbReference type="Gene3D" id="2.30.30.30">
    <property type="match status" value="1"/>
</dbReference>
<dbReference type="Gene3D" id="2.40.50.140">
    <property type="entry name" value="Nucleic acid-binding proteins"/>
    <property type="match status" value="1"/>
</dbReference>
<dbReference type="Gene3D" id="4.10.950.10">
    <property type="entry name" value="Ribosomal protein L2, domain 3"/>
    <property type="match status" value="1"/>
</dbReference>
<dbReference type="HAMAP" id="MF_01320_B">
    <property type="entry name" value="Ribosomal_uL2_B"/>
    <property type="match status" value="1"/>
</dbReference>
<dbReference type="InterPro" id="IPR012340">
    <property type="entry name" value="NA-bd_OB-fold"/>
</dbReference>
<dbReference type="InterPro" id="IPR014722">
    <property type="entry name" value="Rib_uL2_dom2"/>
</dbReference>
<dbReference type="InterPro" id="IPR002171">
    <property type="entry name" value="Ribosomal_uL2"/>
</dbReference>
<dbReference type="InterPro" id="IPR005880">
    <property type="entry name" value="Ribosomal_uL2_bac/org-type"/>
</dbReference>
<dbReference type="InterPro" id="IPR022669">
    <property type="entry name" value="Ribosomal_uL2_C"/>
</dbReference>
<dbReference type="InterPro" id="IPR022671">
    <property type="entry name" value="Ribosomal_uL2_CS"/>
</dbReference>
<dbReference type="InterPro" id="IPR014726">
    <property type="entry name" value="Ribosomal_uL2_dom3"/>
</dbReference>
<dbReference type="InterPro" id="IPR022666">
    <property type="entry name" value="Ribosomal_uL2_RNA-bd_dom"/>
</dbReference>
<dbReference type="InterPro" id="IPR008991">
    <property type="entry name" value="Translation_prot_SH3-like_sf"/>
</dbReference>
<dbReference type="NCBIfam" id="TIGR01171">
    <property type="entry name" value="rplB_bact"/>
    <property type="match status" value="1"/>
</dbReference>
<dbReference type="PANTHER" id="PTHR13691:SF5">
    <property type="entry name" value="LARGE RIBOSOMAL SUBUNIT PROTEIN UL2M"/>
    <property type="match status" value="1"/>
</dbReference>
<dbReference type="PANTHER" id="PTHR13691">
    <property type="entry name" value="RIBOSOMAL PROTEIN L2"/>
    <property type="match status" value="1"/>
</dbReference>
<dbReference type="Pfam" id="PF00181">
    <property type="entry name" value="Ribosomal_L2"/>
    <property type="match status" value="1"/>
</dbReference>
<dbReference type="Pfam" id="PF03947">
    <property type="entry name" value="Ribosomal_L2_C"/>
    <property type="match status" value="1"/>
</dbReference>
<dbReference type="PIRSF" id="PIRSF002158">
    <property type="entry name" value="Ribosomal_L2"/>
    <property type="match status" value="1"/>
</dbReference>
<dbReference type="SMART" id="SM01383">
    <property type="entry name" value="Ribosomal_L2"/>
    <property type="match status" value="1"/>
</dbReference>
<dbReference type="SMART" id="SM01382">
    <property type="entry name" value="Ribosomal_L2_C"/>
    <property type="match status" value="1"/>
</dbReference>
<dbReference type="SUPFAM" id="SSF50249">
    <property type="entry name" value="Nucleic acid-binding proteins"/>
    <property type="match status" value="1"/>
</dbReference>
<dbReference type="SUPFAM" id="SSF50104">
    <property type="entry name" value="Translation proteins SH3-like domain"/>
    <property type="match status" value="1"/>
</dbReference>
<dbReference type="PROSITE" id="PS00467">
    <property type="entry name" value="RIBOSOMAL_L2"/>
    <property type="match status" value="1"/>
</dbReference>